<proteinExistence type="evidence at transcript level"/>
<comment type="subcellular location">
    <subcellularLocation>
        <location evidence="2">Cell projection</location>
        <location evidence="2">Cilium</location>
    </subcellularLocation>
    <text evidence="2">Localizes to the base of the cilium.</text>
</comment>
<comment type="tissue specificity">
    <text evidence="2">Expressed in amphid and phasmid ciliated neurons, and also pharyngeal, touch receptor and motor neurons.</text>
</comment>
<comment type="similarity">
    <text evidence="4">Belongs to the CCDC149 family.</text>
</comment>
<dbReference type="EMBL" id="BX284606">
    <property type="protein sequence ID" value="CAB01752.1"/>
    <property type="molecule type" value="Genomic_DNA"/>
</dbReference>
<dbReference type="PIR" id="T21556">
    <property type="entry name" value="T21556"/>
</dbReference>
<dbReference type="RefSeq" id="NP_509921.1">
    <property type="nucleotide sequence ID" value="NM_077520.3"/>
</dbReference>
<dbReference type="SMR" id="Q93635"/>
<dbReference type="DIP" id="DIP-24925N"/>
<dbReference type="FunCoup" id="Q93635">
    <property type="interactions" value="784"/>
</dbReference>
<dbReference type="IntAct" id="Q93635">
    <property type="interactions" value="1"/>
</dbReference>
<dbReference type="STRING" id="6239.F29G6.2.1"/>
<dbReference type="PaxDb" id="6239-F29G6.2"/>
<dbReference type="EnsemblMetazoa" id="F29G6.2.1">
    <property type="protein sequence ID" value="F29G6.2.1"/>
    <property type="gene ID" value="WBGene00009258"/>
</dbReference>
<dbReference type="GeneID" id="185121"/>
<dbReference type="KEGG" id="cel:CELE_F29G6.2"/>
<dbReference type="UCSC" id="F29G6.2">
    <property type="organism name" value="c. elegans"/>
</dbReference>
<dbReference type="AGR" id="WB:WBGene00009258"/>
<dbReference type="CTD" id="185121"/>
<dbReference type="WormBase" id="F29G6.2">
    <property type="protein sequence ID" value="CE09792"/>
    <property type="gene ID" value="WBGene00009258"/>
    <property type="gene designation" value="ccdc-149"/>
</dbReference>
<dbReference type="eggNOG" id="KOG4687">
    <property type="taxonomic scope" value="Eukaryota"/>
</dbReference>
<dbReference type="GeneTree" id="ENSGT00390000015958"/>
<dbReference type="HOGENOM" id="CLU_076968_0_0_1"/>
<dbReference type="InParanoid" id="Q93635"/>
<dbReference type="OMA" id="INMKQIR"/>
<dbReference type="OrthoDB" id="5917629at2759"/>
<dbReference type="PhylomeDB" id="Q93635"/>
<dbReference type="PRO" id="PR:Q93635"/>
<dbReference type="Proteomes" id="UP000001940">
    <property type="component" value="Chromosome X"/>
</dbReference>
<dbReference type="Bgee" id="WBGene00009258">
    <property type="expression patterns" value="Expressed in pharyngeal muscle cell (C elegans) and 3 other cell types or tissues"/>
</dbReference>
<dbReference type="GO" id="GO:0097546">
    <property type="term" value="C:ciliary base"/>
    <property type="evidence" value="ECO:0000314"/>
    <property type="project" value="UniProtKB"/>
</dbReference>
<dbReference type="Gene3D" id="1.10.287.1490">
    <property type="match status" value="1"/>
</dbReference>
<dbReference type="InterPro" id="IPR019179">
    <property type="entry name" value="Coiled-coil_dom-contain_pr_149"/>
</dbReference>
<dbReference type="PANTHER" id="PTHR21682">
    <property type="entry name" value="COILED-COIL DOMAIN-CONTAINING PROTEIN 149"/>
    <property type="match status" value="1"/>
</dbReference>
<dbReference type="PANTHER" id="PTHR21682:SF2">
    <property type="entry name" value="COILED-COIL DOMAIN-CONTAINING PROTEIN 149"/>
    <property type="match status" value="1"/>
</dbReference>
<dbReference type="Pfam" id="PF09789">
    <property type="entry name" value="CC149"/>
    <property type="match status" value="1"/>
</dbReference>
<name>CC149_CAEEL</name>
<evidence type="ECO:0000255" key="1"/>
<evidence type="ECO:0000269" key="2">
    <source>
    </source>
</evidence>
<evidence type="ECO:0000303" key="3">
    <source>
    </source>
</evidence>
<evidence type="ECO:0000305" key="4"/>
<evidence type="ECO:0000312" key="5">
    <source>
        <dbReference type="Proteomes" id="UP000001940"/>
    </source>
</evidence>
<evidence type="ECO:0000312" key="6">
    <source>
        <dbReference type="WormBase" id="F29G6.2"/>
    </source>
</evidence>
<organism evidence="5">
    <name type="scientific">Caenorhabditis elegans</name>
    <dbReference type="NCBI Taxonomy" id="6239"/>
    <lineage>
        <taxon>Eukaryota</taxon>
        <taxon>Metazoa</taxon>
        <taxon>Ecdysozoa</taxon>
        <taxon>Nematoda</taxon>
        <taxon>Chromadorea</taxon>
        <taxon>Rhabditida</taxon>
        <taxon>Rhabditina</taxon>
        <taxon>Rhabditomorpha</taxon>
        <taxon>Rhabditoidea</taxon>
        <taxon>Rhabditidae</taxon>
        <taxon>Peloderinae</taxon>
        <taxon>Caenorhabditis</taxon>
    </lineage>
</organism>
<sequence>MKENNNAEILELKKQFTALQQKCGAKTDTIVRLGQDLEKSENEKKGLAARVETLERNLERSERELQLVCACQNDMKIKFGTERQDLIEDIEKYKRENQQLRTDRQELLDQKADLKKDCKTFRQTIAQFEVEKMGGPVRNSFSTENDEVSKLEAHEKLQAKCKGLESDLRSMLGIKEELLMERDEMQRKVARLSNELSYLLNGDPRRVAEDLDSLVAENRFLKAKLNTAEEESESIKMTLAKYKQMAEAVNVQTMVNRSPKAGEGDDKPSVAVINMKQIRELLASHAIELVESDYRAITTILLDLCNDKQMALAHSRRANKVLGMRLHEVESKLAVLDIKSRSSSPRHELPRDEDIELVVPKAVASTSSK</sequence>
<feature type="chain" id="PRO_0000439159" description="Coiled-coil domain-containing protein 149" evidence="4">
    <location>
        <begin position="1"/>
        <end position="369"/>
    </location>
</feature>
<feature type="coiled-coil region" evidence="1">
    <location>
        <begin position="1"/>
        <end position="249"/>
    </location>
</feature>
<accession>Q93635</accession>
<reference evidence="5" key="1">
    <citation type="journal article" date="1998" name="Science">
        <title>Genome sequence of the nematode C. elegans: a platform for investigating biology.</title>
        <authorList>
            <consortium name="The C. elegans sequencing consortium"/>
        </authorList>
    </citation>
    <scope>NUCLEOTIDE SEQUENCE [LARGE SCALE GENOMIC DNA]</scope>
    <source>
        <strain evidence="5">Bristol N2</strain>
    </source>
</reference>
<reference evidence="4" key="2">
    <citation type="journal article" date="2016" name="PLoS Genet.">
        <title>Whole-organism developmental expression profiling identifies rab-28 as a novel ciliary GTPase associated with the BBSome and intraflagellar transport.</title>
        <authorList>
            <person name="Jensen V.L."/>
            <person name="Carter S."/>
            <person name="Sanders A.A."/>
            <person name="Li C."/>
            <person name="Kennedy J."/>
            <person name="Timbers T.A."/>
            <person name="Cai J."/>
            <person name="Scheidel N."/>
            <person name="Kennedy B.N."/>
            <person name="Morin R.D."/>
            <person name="Leroux M.R."/>
            <person name="Blacque O.E."/>
        </authorList>
    </citation>
    <scope>SUBCELLULAR LOCATION</scope>
    <scope>TISSUE SPECIFICITY</scope>
</reference>
<protein>
    <recommendedName>
        <fullName evidence="6">Coiled-coil domain-containing protein 149</fullName>
    </recommendedName>
</protein>
<keyword id="KW-0966">Cell projection</keyword>
<keyword id="KW-0969">Cilium</keyword>
<keyword id="KW-0175">Coiled coil</keyword>
<keyword id="KW-1185">Reference proteome</keyword>
<gene>
    <name evidence="3 6" type="primary">ccdc-149</name>
    <name evidence="6" type="ORF">F29G6.2</name>
</gene>